<dbReference type="EMBL" id="AY301268">
    <property type="protein sequence ID" value="AAQ81973.1"/>
    <property type="molecule type" value="mRNA"/>
</dbReference>
<dbReference type="EMBL" id="AL355987">
    <property type="status" value="NOT_ANNOTATED_CDS"/>
    <property type="molecule type" value="Genomic_DNA"/>
</dbReference>
<dbReference type="EMBL" id="CH471090">
    <property type="protein sequence ID" value="EAW88265.1"/>
    <property type="molecule type" value="Genomic_DNA"/>
</dbReference>
<dbReference type="EMBL" id="BC130465">
    <property type="protein sequence ID" value="AAI30466.1"/>
    <property type="molecule type" value="mRNA"/>
</dbReference>
<dbReference type="EMBL" id="BC132714">
    <property type="protein sequence ID" value="AAI32715.1"/>
    <property type="molecule type" value="mRNA"/>
</dbReference>
<dbReference type="CCDS" id="CCDS35183.1">
    <molecule id="Q6JVE9-2"/>
</dbReference>
<dbReference type="CCDS" id="CCDS87717.1">
    <molecule id="Q6JVE9-1"/>
</dbReference>
<dbReference type="RefSeq" id="NP_001332863.1">
    <molecule id="Q6JVE9-1"/>
    <property type="nucleotide sequence ID" value="NM_001345934.2"/>
</dbReference>
<dbReference type="RefSeq" id="NP_848564.2">
    <molecule id="Q6JVE9-2"/>
    <property type="nucleotide sequence ID" value="NM_178469.3"/>
</dbReference>
<dbReference type="SMR" id="Q6JVE9"/>
<dbReference type="BioGRID" id="126509">
    <property type="interactions" value="17"/>
</dbReference>
<dbReference type="FunCoup" id="Q6JVE9">
    <property type="interactions" value="1"/>
</dbReference>
<dbReference type="IntAct" id="Q6JVE9">
    <property type="interactions" value="7"/>
</dbReference>
<dbReference type="STRING" id="9606.ENSP00000482512"/>
<dbReference type="GlyCosmos" id="Q6JVE9">
    <property type="glycosylation" value="2 sites, No reported glycans"/>
</dbReference>
<dbReference type="GlyGen" id="Q6JVE9">
    <property type="glycosylation" value="2 sites"/>
</dbReference>
<dbReference type="iPTMnet" id="Q6JVE9"/>
<dbReference type="PhosphoSitePlus" id="Q6JVE9"/>
<dbReference type="BioMuta" id="LCN8"/>
<dbReference type="DMDM" id="62286816"/>
<dbReference type="MassIVE" id="Q6JVE9"/>
<dbReference type="PaxDb" id="9606-ENSP00000360753"/>
<dbReference type="Antibodypedia" id="32229">
    <property type="antibodies" value="104 antibodies from 19 providers"/>
</dbReference>
<dbReference type="DNASU" id="138307"/>
<dbReference type="Ensembl" id="ENST00000371688.8">
    <molecule id="Q6JVE9-2"/>
    <property type="protein sequence ID" value="ENSP00000360753.3"/>
    <property type="gene ID" value="ENSG00000204001.10"/>
</dbReference>
<dbReference type="Ensembl" id="ENST00000612714.1">
    <molecule id="Q6JVE9-1"/>
    <property type="protein sequence ID" value="ENSP00000482512.1"/>
    <property type="gene ID" value="ENSG00000204001.10"/>
</dbReference>
<dbReference type="GeneID" id="138307"/>
<dbReference type="KEGG" id="hsa:138307"/>
<dbReference type="MANE-Select" id="ENST00000371688.8">
    <molecule id="Q6JVE9-2"/>
    <property type="protein sequence ID" value="ENSP00000360753.3"/>
    <property type="RefSeq nucleotide sequence ID" value="NM_178469.4"/>
    <property type="RefSeq protein sequence ID" value="NP_848564.2"/>
</dbReference>
<dbReference type="UCSC" id="uc004cjb.2">
    <molecule id="Q6JVE9-1"/>
    <property type="organism name" value="human"/>
</dbReference>
<dbReference type="AGR" id="HGNC:27038"/>
<dbReference type="CTD" id="138307"/>
<dbReference type="GeneCards" id="LCN8"/>
<dbReference type="HGNC" id="HGNC:27038">
    <property type="gene designation" value="LCN8"/>
</dbReference>
<dbReference type="HPA" id="ENSG00000204001">
    <property type="expression patterns" value="Tissue enriched (epididymis)"/>
</dbReference>
<dbReference type="MIM" id="612902">
    <property type="type" value="gene"/>
</dbReference>
<dbReference type="neXtProt" id="NX_Q6JVE9"/>
<dbReference type="OpenTargets" id="ENSG00000204001"/>
<dbReference type="PharmGKB" id="PA134958919"/>
<dbReference type="VEuPathDB" id="HostDB:ENSG00000204001"/>
<dbReference type="eggNOG" id="ENOG502TDU8">
    <property type="taxonomic scope" value="Eukaryota"/>
</dbReference>
<dbReference type="GeneTree" id="ENSGT01050000244868"/>
<dbReference type="HOGENOM" id="CLU_107634_0_0_1"/>
<dbReference type="InParanoid" id="Q6JVE9"/>
<dbReference type="OMA" id="RHGRCAE"/>
<dbReference type="OrthoDB" id="9627583at2759"/>
<dbReference type="PAN-GO" id="Q6JVE9">
    <property type="GO annotations" value="0 GO annotations based on evolutionary models"/>
</dbReference>
<dbReference type="PhylomeDB" id="Q6JVE9"/>
<dbReference type="TreeFam" id="TF337931"/>
<dbReference type="PathwayCommons" id="Q6JVE9"/>
<dbReference type="BioGRID-ORCS" id="138307">
    <property type="hits" value="48 hits in 1143 CRISPR screens"/>
</dbReference>
<dbReference type="GenomeRNAi" id="138307"/>
<dbReference type="Pharos" id="Q6JVE9">
    <property type="development level" value="Tbio"/>
</dbReference>
<dbReference type="PRO" id="PR:Q6JVE9"/>
<dbReference type="Proteomes" id="UP000005640">
    <property type="component" value="Chromosome 9"/>
</dbReference>
<dbReference type="RNAct" id="Q6JVE9">
    <property type="molecule type" value="protein"/>
</dbReference>
<dbReference type="Bgee" id="ENSG00000204001">
    <property type="expression patterns" value="Expressed in corpus epididymis and 90 other cell types or tissues"/>
</dbReference>
<dbReference type="ExpressionAtlas" id="Q6JVE9">
    <property type="expression patterns" value="baseline and differential"/>
</dbReference>
<dbReference type="GO" id="GO:0005576">
    <property type="term" value="C:extracellular region"/>
    <property type="evidence" value="ECO:0007669"/>
    <property type="project" value="UniProtKB-SubCell"/>
</dbReference>
<dbReference type="GO" id="GO:0036094">
    <property type="term" value="F:small molecule binding"/>
    <property type="evidence" value="ECO:0007669"/>
    <property type="project" value="InterPro"/>
</dbReference>
<dbReference type="GO" id="GO:0009725">
    <property type="term" value="P:response to hormone"/>
    <property type="evidence" value="ECO:0007669"/>
    <property type="project" value="Ensembl"/>
</dbReference>
<dbReference type="CDD" id="cd19421">
    <property type="entry name" value="lipocalin_5_8-like"/>
    <property type="match status" value="1"/>
</dbReference>
<dbReference type="Gene3D" id="2.40.128.20">
    <property type="match status" value="1"/>
</dbReference>
<dbReference type="InterPro" id="IPR012674">
    <property type="entry name" value="Calycin"/>
</dbReference>
<dbReference type="InterPro" id="IPR002345">
    <property type="entry name" value="Lipocalin"/>
</dbReference>
<dbReference type="InterPro" id="IPR000566">
    <property type="entry name" value="Lipocln_cytosolic_FA-bd_dom"/>
</dbReference>
<dbReference type="PANTHER" id="PTHR11430:SF1">
    <property type="entry name" value="EPIDIDYMAL-SPECIFIC LIPOCALIN-8"/>
    <property type="match status" value="1"/>
</dbReference>
<dbReference type="PANTHER" id="PTHR11430">
    <property type="entry name" value="LIPOCALIN"/>
    <property type="match status" value="1"/>
</dbReference>
<dbReference type="Pfam" id="PF00061">
    <property type="entry name" value="Lipocalin"/>
    <property type="match status" value="1"/>
</dbReference>
<dbReference type="SUPFAM" id="SSF50814">
    <property type="entry name" value="Lipocalins"/>
    <property type="match status" value="1"/>
</dbReference>
<name>LCN8_HUMAN</name>
<keyword id="KW-0025">Alternative splicing</keyword>
<keyword id="KW-1015">Disulfide bond</keyword>
<keyword id="KW-0325">Glycoprotein</keyword>
<keyword id="KW-1185">Reference proteome</keyword>
<keyword id="KW-0964">Secreted</keyword>
<keyword id="KW-0732">Signal</keyword>
<keyword id="KW-0813">Transport</keyword>
<feature type="signal peptide" evidence="2">
    <location>
        <begin position="1"/>
        <end position="25"/>
    </location>
</feature>
<feature type="chain" id="PRO_0000017916" description="Epididymal-specific lipocalin-8">
    <location>
        <begin position="26"/>
        <end position="175"/>
    </location>
</feature>
<feature type="glycosylation site" description="N-linked (GlcNAc...) asparagine" evidence="2">
    <location>
        <position position="66"/>
    </location>
</feature>
<feature type="glycosylation site" description="N-linked (GlcNAc...) asparagine" evidence="2">
    <location>
        <position position="74"/>
    </location>
</feature>
<feature type="disulfide bond" evidence="1">
    <location>
        <begin position="79"/>
        <end position="166"/>
    </location>
</feature>
<feature type="splice variant" id="VSP_040219" description="In isoform 2." evidence="3">
    <original>MPGAAEALPTVTVTLVAGAVPPASGALTAHC</original>
    <variation>MEELDRQK</variation>
    <location>
        <begin position="1"/>
        <end position="31"/>
    </location>
</feature>
<proteinExistence type="evidence at transcript level"/>
<gene>
    <name type="primary">LCN8</name>
    <name type="synonym">LCN5</name>
</gene>
<evidence type="ECO:0000250" key="1"/>
<evidence type="ECO:0000255" key="2"/>
<evidence type="ECO:0000303" key="3">
    <source>
    </source>
</evidence>
<evidence type="ECO:0000305" key="4"/>
<comment type="function">
    <text>May play a role in male fertility. May act as a retinoid carrier protein within the epididymis.</text>
</comment>
<comment type="subcellular location">
    <subcellularLocation>
        <location evidence="1">Secreted</location>
    </subcellularLocation>
</comment>
<comment type="alternative products">
    <event type="alternative splicing"/>
    <isoform>
        <id>Q6JVE9-1</id>
        <name>1</name>
        <sequence type="displayed"/>
    </isoform>
    <isoform>
        <id>Q6JVE9-2</id>
        <name>2</name>
        <sequence type="described" ref="VSP_040219"/>
    </isoform>
</comment>
<comment type="similarity">
    <text evidence="4">Belongs to the calycin superfamily. Lipocalin family.</text>
</comment>
<reference key="1">
    <citation type="journal article" date="2004" name="Gene">
        <title>Molecular evolution of epididymal lipocalin genes localized on mouse chromosome 2.</title>
        <authorList>
            <person name="Suzuki K."/>
            <person name="Lareyre J.-J."/>
            <person name="Sanchez D."/>
            <person name="Gutierrez G."/>
            <person name="Araki Y."/>
            <person name="Matusik R.J."/>
            <person name="Orgebin-Crist M.-C."/>
        </authorList>
    </citation>
    <scope>NUCLEOTIDE SEQUENCE [MRNA] (ISOFORM 1)</scope>
</reference>
<reference key="2">
    <citation type="journal article" date="2004" name="Nature">
        <title>DNA sequence and analysis of human chromosome 9.</title>
        <authorList>
            <person name="Humphray S.J."/>
            <person name="Oliver K."/>
            <person name="Hunt A.R."/>
            <person name="Plumb R.W."/>
            <person name="Loveland J.E."/>
            <person name="Howe K.L."/>
            <person name="Andrews T.D."/>
            <person name="Searle S."/>
            <person name="Hunt S.E."/>
            <person name="Scott C.E."/>
            <person name="Jones M.C."/>
            <person name="Ainscough R."/>
            <person name="Almeida J.P."/>
            <person name="Ambrose K.D."/>
            <person name="Ashwell R.I.S."/>
            <person name="Babbage A.K."/>
            <person name="Babbage S."/>
            <person name="Bagguley C.L."/>
            <person name="Bailey J."/>
            <person name="Banerjee R."/>
            <person name="Barker D.J."/>
            <person name="Barlow K.F."/>
            <person name="Bates K."/>
            <person name="Beasley H."/>
            <person name="Beasley O."/>
            <person name="Bird C.P."/>
            <person name="Bray-Allen S."/>
            <person name="Brown A.J."/>
            <person name="Brown J.Y."/>
            <person name="Burford D."/>
            <person name="Burrill W."/>
            <person name="Burton J."/>
            <person name="Carder C."/>
            <person name="Carter N.P."/>
            <person name="Chapman J.C."/>
            <person name="Chen Y."/>
            <person name="Clarke G."/>
            <person name="Clark S.Y."/>
            <person name="Clee C.M."/>
            <person name="Clegg S."/>
            <person name="Collier R.E."/>
            <person name="Corby N."/>
            <person name="Crosier M."/>
            <person name="Cummings A.T."/>
            <person name="Davies J."/>
            <person name="Dhami P."/>
            <person name="Dunn M."/>
            <person name="Dutta I."/>
            <person name="Dyer L.W."/>
            <person name="Earthrowl M.E."/>
            <person name="Faulkner L."/>
            <person name="Fleming C.J."/>
            <person name="Frankish A."/>
            <person name="Frankland J.A."/>
            <person name="French L."/>
            <person name="Fricker D.G."/>
            <person name="Garner P."/>
            <person name="Garnett J."/>
            <person name="Ghori J."/>
            <person name="Gilbert J.G.R."/>
            <person name="Glison C."/>
            <person name="Grafham D.V."/>
            <person name="Gribble S."/>
            <person name="Griffiths C."/>
            <person name="Griffiths-Jones S."/>
            <person name="Grocock R."/>
            <person name="Guy J."/>
            <person name="Hall R.E."/>
            <person name="Hammond S."/>
            <person name="Harley J.L."/>
            <person name="Harrison E.S.I."/>
            <person name="Hart E.A."/>
            <person name="Heath P.D."/>
            <person name="Henderson C.D."/>
            <person name="Hopkins B.L."/>
            <person name="Howard P.J."/>
            <person name="Howden P.J."/>
            <person name="Huckle E."/>
            <person name="Johnson C."/>
            <person name="Johnson D."/>
            <person name="Joy A.A."/>
            <person name="Kay M."/>
            <person name="Keenan S."/>
            <person name="Kershaw J.K."/>
            <person name="Kimberley A.M."/>
            <person name="King A."/>
            <person name="Knights A."/>
            <person name="Laird G.K."/>
            <person name="Langford C."/>
            <person name="Lawlor S."/>
            <person name="Leongamornlert D.A."/>
            <person name="Leversha M."/>
            <person name="Lloyd C."/>
            <person name="Lloyd D.M."/>
            <person name="Lovell J."/>
            <person name="Martin S."/>
            <person name="Mashreghi-Mohammadi M."/>
            <person name="Matthews L."/>
            <person name="McLaren S."/>
            <person name="McLay K.E."/>
            <person name="McMurray A."/>
            <person name="Milne S."/>
            <person name="Nickerson T."/>
            <person name="Nisbett J."/>
            <person name="Nordsiek G."/>
            <person name="Pearce A.V."/>
            <person name="Peck A.I."/>
            <person name="Porter K.M."/>
            <person name="Pandian R."/>
            <person name="Pelan S."/>
            <person name="Phillimore B."/>
            <person name="Povey S."/>
            <person name="Ramsey Y."/>
            <person name="Rand V."/>
            <person name="Scharfe M."/>
            <person name="Sehra H.K."/>
            <person name="Shownkeen R."/>
            <person name="Sims S.K."/>
            <person name="Skuce C.D."/>
            <person name="Smith M."/>
            <person name="Steward C.A."/>
            <person name="Swarbreck D."/>
            <person name="Sycamore N."/>
            <person name="Tester J."/>
            <person name="Thorpe A."/>
            <person name="Tracey A."/>
            <person name="Tromans A."/>
            <person name="Thomas D.W."/>
            <person name="Wall M."/>
            <person name="Wallis J.M."/>
            <person name="West A.P."/>
            <person name="Whitehead S.L."/>
            <person name="Willey D.L."/>
            <person name="Williams S.A."/>
            <person name="Wilming L."/>
            <person name="Wray P.W."/>
            <person name="Young L."/>
            <person name="Ashurst J.L."/>
            <person name="Coulson A."/>
            <person name="Blocker H."/>
            <person name="Durbin R.M."/>
            <person name="Sulston J.E."/>
            <person name="Hubbard T."/>
            <person name="Jackson M.J."/>
            <person name="Bentley D.R."/>
            <person name="Beck S."/>
            <person name="Rogers J."/>
            <person name="Dunham I."/>
        </authorList>
    </citation>
    <scope>NUCLEOTIDE SEQUENCE [LARGE SCALE GENOMIC DNA] (ISOFORM 1)</scope>
</reference>
<reference key="3">
    <citation type="submission" date="2005-07" db="EMBL/GenBank/DDBJ databases">
        <authorList>
            <person name="Mural R.J."/>
            <person name="Istrail S."/>
            <person name="Sutton G.G."/>
            <person name="Florea L."/>
            <person name="Halpern A.L."/>
            <person name="Mobarry C.M."/>
            <person name="Lippert R."/>
            <person name="Walenz B."/>
            <person name="Shatkay H."/>
            <person name="Dew I."/>
            <person name="Miller J.R."/>
            <person name="Flanigan M.J."/>
            <person name="Edwards N.J."/>
            <person name="Bolanos R."/>
            <person name="Fasulo D."/>
            <person name="Halldorsson B.V."/>
            <person name="Hannenhalli S."/>
            <person name="Turner R."/>
            <person name="Yooseph S."/>
            <person name="Lu F."/>
            <person name="Nusskern D.R."/>
            <person name="Shue B.C."/>
            <person name="Zheng X.H."/>
            <person name="Zhong F."/>
            <person name="Delcher A.L."/>
            <person name="Huson D.H."/>
            <person name="Kravitz S.A."/>
            <person name="Mouchard L."/>
            <person name="Reinert K."/>
            <person name="Remington K.A."/>
            <person name="Clark A.G."/>
            <person name="Waterman M.S."/>
            <person name="Eichler E.E."/>
            <person name="Adams M.D."/>
            <person name="Hunkapiller M.W."/>
            <person name="Myers E.W."/>
            <person name="Venter J.C."/>
        </authorList>
    </citation>
    <scope>NUCLEOTIDE SEQUENCE [LARGE SCALE GENOMIC DNA]</scope>
</reference>
<reference key="4">
    <citation type="journal article" date="2004" name="Genome Res.">
        <title>The status, quality, and expansion of the NIH full-length cDNA project: the Mammalian Gene Collection (MGC).</title>
        <authorList>
            <consortium name="The MGC Project Team"/>
        </authorList>
    </citation>
    <scope>NUCLEOTIDE SEQUENCE [LARGE SCALE MRNA] (ISOFORM 2)</scope>
</reference>
<protein>
    <recommendedName>
        <fullName>Epididymal-specific lipocalin-8</fullName>
    </recommendedName>
</protein>
<organism>
    <name type="scientific">Homo sapiens</name>
    <name type="common">Human</name>
    <dbReference type="NCBI Taxonomy" id="9606"/>
    <lineage>
        <taxon>Eukaryota</taxon>
        <taxon>Metazoa</taxon>
        <taxon>Chordata</taxon>
        <taxon>Craniata</taxon>
        <taxon>Vertebrata</taxon>
        <taxon>Euteleostomi</taxon>
        <taxon>Mammalia</taxon>
        <taxon>Eutheria</taxon>
        <taxon>Euarchontoglires</taxon>
        <taxon>Primates</taxon>
        <taxon>Haplorrhini</taxon>
        <taxon>Catarrhini</taxon>
        <taxon>Hominidae</taxon>
        <taxon>Homo</taxon>
    </lineage>
</organism>
<accession>Q6JVE9</accession>
<accession>A1L4A8</accession>
<accession>A6NMN9</accession>
<accession>Q5T5R4</accession>
<sequence>MPGAAEALPTVTVTLVAGAVPPASGALTAHCIGGFWREVGVASDQSLVLTAPKRVEGLFLTLSGSNLTVKVAYNSSGSCEIEKIVGSEIDSTGKFAFPGHREIHVLDTDYEGYAILRVSLMWRGRNFRVLKYFTRSLEDKDRLGFWKFRELTADTGLYLAARPGRCAELLKEELI</sequence>